<sequence>MHQFQQDNQYFIFNFDRTFEQATEFFQAEFWQKQERVIGSAKGRGTTYFLQTEDWFGVNCALRHYYRGGLWGKLNKDRYRFSALETTRSFAEFHLLQRLYEAGLPVPKPIAARIQKGKLGICYQADILTEKIENAQDLTALLQTQTLPKETWRQIGRLIRKLHDLQICHTDLNAHNILLQQAEQEQKCWLIDFDKCGKKSGDFWKAQNLNRLKRSFEKEVGRMNIQFTEQNWADLTAAYHQ</sequence>
<protein>
    <recommendedName>
        <fullName evidence="1">3-deoxy-D-manno-octulosonic acid kinase</fullName>
        <shortName evidence="1">Kdo kinase</shortName>
        <ecNumber evidence="1">2.7.1.166</ecNumber>
    </recommendedName>
</protein>
<gene>
    <name evidence="1" type="primary">kdkA</name>
    <name type="ordered locus">NTHI0367</name>
</gene>
<reference key="1">
    <citation type="journal article" date="2005" name="J. Bacteriol.">
        <title>Genomic sequence of an otitis media isolate of nontypeable Haemophilus influenzae: comparative study with H. influenzae serotype d, strain KW20.</title>
        <authorList>
            <person name="Harrison A."/>
            <person name="Dyer D.W."/>
            <person name="Gillaspy A."/>
            <person name="Ray W.C."/>
            <person name="Mungur R."/>
            <person name="Carson M.B."/>
            <person name="Zhong H."/>
            <person name="Gipson J."/>
            <person name="Gipson M."/>
            <person name="Johnson L.S."/>
            <person name="Lewis L."/>
            <person name="Bakaletz L.O."/>
            <person name="Munson R.S. Jr."/>
        </authorList>
    </citation>
    <scope>NUCLEOTIDE SEQUENCE [LARGE SCALE GENOMIC DNA]</scope>
    <source>
        <strain>86-028NP</strain>
    </source>
</reference>
<accession>Q4QNS8</accession>
<name>KDKA_HAEI8</name>
<proteinExistence type="inferred from homology"/>
<comment type="function">
    <text evidence="1">Catalyzes the ATP-dependent phosphorylation of the 3-deoxy-D-manno-octulosonic acid (Kdo) residue in Kdo-lipid IV(A) at the 4-OH position.</text>
</comment>
<comment type="catalytic activity">
    <reaction evidence="1">
        <text>an alpha-Kdo-(2-&gt;6)-lipid IVA + ATP = a 4-O-phospho-alpha-Kdo-(2-&gt;6)-lipid IVA + ADP + H(+)</text>
        <dbReference type="Rhea" id="RHEA:74271"/>
        <dbReference type="ChEBI" id="CHEBI:15378"/>
        <dbReference type="ChEBI" id="CHEBI:30616"/>
        <dbReference type="ChEBI" id="CHEBI:176428"/>
        <dbReference type="ChEBI" id="CHEBI:193140"/>
        <dbReference type="ChEBI" id="CHEBI:456216"/>
        <dbReference type="EC" id="2.7.1.166"/>
    </reaction>
</comment>
<comment type="pathway">
    <text evidence="1">Bacterial outer membrane biogenesis; LPS core biosynthesis.</text>
</comment>
<comment type="subcellular location">
    <subcellularLocation>
        <location evidence="1">Cell inner membrane</location>
        <topology evidence="1">Peripheral membrane protein</topology>
        <orientation evidence="1">Cytoplasmic side</orientation>
    </subcellularLocation>
</comment>
<comment type="similarity">
    <text evidence="1">Belongs to the protein kinase superfamily. KdkA/RfaP family.</text>
</comment>
<organism>
    <name type="scientific">Haemophilus influenzae (strain 86-028NP)</name>
    <dbReference type="NCBI Taxonomy" id="281310"/>
    <lineage>
        <taxon>Bacteria</taxon>
        <taxon>Pseudomonadati</taxon>
        <taxon>Pseudomonadota</taxon>
        <taxon>Gammaproteobacteria</taxon>
        <taxon>Pasteurellales</taxon>
        <taxon>Pasteurellaceae</taxon>
        <taxon>Haemophilus</taxon>
    </lineage>
</organism>
<evidence type="ECO:0000255" key="1">
    <source>
        <dbReference type="HAMAP-Rule" id="MF_00521"/>
    </source>
</evidence>
<dbReference type="EC" id="2.7.1.166" evidence="1"/>
<dbReference type="EMBL" id="CP000057">
    <property type="protein sequence ID" value="AAX87319.1"/>
    <property type="molecule type" value="Genomic_DNA"/>
</dbReference>
<dbReference type="RefSeq" id="WP_011271950.1">
    <property type="nucleotide sequence ID" value="NC_007146.2"/>
</dbReference>
<dbReference type="SMR" id="Q4QNS8"/>
<dbReference type="KEGG" id="hit:NTHI0367"/>
<dbReference type="HOGENOM" id="CLU_094226_0_0_6"/>
<dbReference type="BRENDA" id="2.7.1.166">
    <property type="organism ID" value="2529"/>
</dbReference>
<dbReference type="UniPathway" id="UPA00958"/>
<dbReference type="Proteomes" id="UP000002525">
    <property type="component" value="Chromosome"/>
</dbReference>
<dbReference type="GO" id="GO:0005829">
    <property type="term" value="C:cytosol"/>
    <property type="evidence" value="ECO:0007669"/>
    <property type="project" value="TreeGrafter"/>
</dbReference>
<dbReference type="GO" id="GO:0005886">
    <property type="term" value="C:plasma membrane"/>
    <property type="evidence" value="ECO:0007669"/>
    <property type="project" value="UniProtKB-SubCell"/>
</dbReference>
<dbReference type="GO" id="GO:0005524">
    <property type="term" value="F:ATP binding"/>
    <property type="evidence" value="ECO:0007669"/>
    <property type="project" value="UniProtKB-UniRule"/>
</dbReference>
<dbReference type="GO" id="GO:0004674">
    <property type="term" value="F:protein serine/threonine kinase activity"/>
    <property type="evidence" value="ECO:0007669"/>
    <property type="project" value="TreeGrafter"/>
</dbReference>
<dbReference type="GO" id="GO:0009244">
    <property type="term" value="P:lipopolysaccharide core region biosynthetic process"/>
    <property type="evidence" value="ECO:0007669"/>
    <property type="project" value="UniProtKB-UniRule"/>
</dbReference>
<dbReference type="Gene3D" id="1.10.510.10">
    <property type="entry name" value="Transferase(Phosphotransferase) domain 1"/>
    <property type="match status" value="1"/>
</dbReference>
<dbReference type="HAMAP" id="MF_00521">
    <property type="entry name" value="KDO_kinase"/>
    <property type="match status" value="1"/>
</dbReference>
<dbReference type="InterPro" id="IPR022826">
    <property type="entry name" value="KDO_kinase"/>
</dbReference>
<dbReference type="InterPro" id="IPR011009">
    <property type="entry name" value="Kinase-like_dom_sf"/>
</dbReference>
<dbReference type="NCBIfam" id="NF002475">
    <property type="entry name" value="PRK01723.1"/>
    <property type="match status" value="1"/>
</dbReference>
<dbReference type="PANTHER" id="PTHR12209:SF0">
    <property type="entry name" value="EKC_KEOPS COMPLEX SUBUNIT TP53RK"/>
    <property type="match status" value="1"/>
</dbReference>
<dbReference type="PANTHER" id="PTHR12209">
    <property type="entry name" value="NON-SPECIFIC SERINE/THREONINE PROTEIN KINASE"/>
    <property type="match status" value="1"/>
</dbReference>
<dbReference type="Pfam" id="PF06293">
    <property type="entry name" value="Kdo"/>
    <property type="match status" value="1"/>
</dbReference>
<dbReference type="SUPFAM" id="SSF56112">
    <property type="entry name" value="Protein kinase-like (PK-like)"/>
    <property type="match status" value="1"/>
</dbReference>
<keyword id="KW-0067">ATP-binding</keyword>
<keyword id="KW-0997">Cell inner membrane</keyword>
<keyword id="KW-1003">Cell membrane</keyword>
<keyword id="KW-0418">Kinase</keyword>
<keyword id="KW-0448">Lipopolysaccharide biosynthesis</keyword>
<keyword id="KW-0472">Membrane</keyword>
<keyword id="KW-0547">Nucleotide-binding</keyword>
<keyword id="KW-0808">Transferase</keyword>
<feature type="chain" id="PRO_0000263412" description="3-deoxy-D-manno-octulosonic acid kinase">
    <location>
        <begin position="1"/>
        <end position="241"/>
    </location>
</feature>
<feature type="active site" evidence="1">
    <location>
        <position position="171"/>
    </location>
</feature>